<proteinExistence type="evidence at protein level"/>
<evidence type="ECO:0000255" key="1">
    <source>
        <dbReference type="PROSITE-ProRule" id="PRU00175"/>
    </source>
</evidence>
<evidence type="ECO:0000255" key="2">
    <source>
        <dbReference type="PROSITE-ProRule" id="PRU00186"/>
    </source>
</evidence>
<evidence type="ECO:0000255" key="3">
    <source>
        <dbReference type="PROSITE-ProRule" id="PRU01256"/>
    </source>
</evidence>
<evidence type="ECO:0000256" key="4">
    <source>
        <dbReference type="SAM" id="MobiDB-lite"/>
    </source>
</evidence>
<evidence type="ECO:0000269" key="5">
    <source>
    </source>
</evidence>
<evidence type="ECO:0000269" key="6">
    <source>
    </source>
</evidence>
<evidence type="ECO:0000269" key="7">
    <source>
    </source>
</evidence>
<evidence type="ECO:0000269" key="8">
    <source>
    </source>
</evidence>
<evidence type="ECO:0000269" key="9">
    <source>
    </source>
</evidence>
<evidence type="ECO:0000269" key="10">
    <source>
    </source>
</evidence>
<evidence type="ECO:0000269" key="11">
    <source>
    </source>
</evidence>
<evidence type="ECO:0000269" key="12">
    <source>
    </source>
</evidence>
<evidence type="ECO:0000269" key="13">
    <source>
    </source>
</evidence>
<evidence type="ECO:0000305" key="14"/>
<evidence type="ECO:0007744" key="15">
    <source>
    </source>
</evidence>
<evidence type="ECO:0007744" key="16">
    <source>
    </source>
</evidence>
<comment type="function">
    <text evidence="5 6 7 9 10 11 12 13">E3 RING-finger protein, member of the UBC2/RAD6 epistasis group. Associates to the E2 ubiquitin conjugating enzyme UBC2/RAD6 to form the UBC2-RAD18 ubiquitin ligase complex involved in postreplicative repair (PRR) of damaged DNA. The UBC2-RAD18 complex cooperates with RAD5 and the UBC13-MMS2 dimer to attach mono-ubiquitin chains on 'Lys-164' of POL30, which is necessary for PRR. The UBC2-RAD18 complex is also involved in prevention of spontaneous mutations caused by 7,8-dihydro-8-oxoguanine.</text>
</comment>
<comment type="catalytic activity">
    <reaction>
        <text>S-ubiquitinyl-[E2 ubiquitin-conjugating enzyme]-L-cysteine + [acceptor protein]-L-lysine = [E2 ubiquitin-conjugating enzyme]-L-cysteine + N(6)-ubiquitinyl-[acceptor protein]-L-lysine.</text>
        <dbReference type="EC" id="2.3.2.27"/>
    </reaction>
</comment>
<comment type="pathway">
    <text>Protein modification; protein ubiquitination.</text>
</comment>
<comment type="subunit">
    <text evidence="5 7 12 13">Homodimer. Interacts with E2 UBC2, forming a complex with ubiquitin ligase activity. The UBC2-RAD18 complex interacts itself with the UBC13-MMS2 ubiquitin ligase complex through direct interactions of both RAD18 and UBC13 with RAD5. Also interacts with UBC9. Binds single strand DNA.</text>
</comment>
<comment type="interaction">
    <interactant intactId="EBI-14659">
        <id>P10862</id>
    </interactant>
    <interactant intactId="EBI-19722">
        <id>P06104</id>
        <label>RAD6</label>
    </interactant>
    <organismsDiffer>false</organismsDiffer>
    <experiments>5</experiments>
</comment>
<comment type="subcellular location">
    <subcellularLocation>
        <location evidence="5">Nucleus</location>
    </subcellularLocation>
</comment>
<comment type="miscellaneous">
    <text evidence="8">Present with 206 molecules/cell in log phase SD medium.</text>
</comment>
<comment type="similarity">
    <text evidence="14">Belongs to the RAD18 family.</text>
</comment>
<dbReference type="EC" id="2.3.2.27"/>
<dbReference type="EMBL" id="X12542">
    <property type="protein sequence ID" value="CAA31059.1"/>
    <property type="molecule type" value="Genomic_DNA"/>
</dbReference>
<dbReference type="EMBL" id="M36405">
    <property type="protein sequence ID" value="AAA34932.1"/>
    <property type="molecule type" value="Genomic_DNA"/>
</dbReference>
<dbReference type="EMBL" id="X12588">
    <property type="protein sequence ID" value="CAA31101.1"/>
    <property type="molecule type" value="Genomic_DNA"/>
</dbReference>
<dbReference type="EMBL" id="X59720">
    <property type="protein sequence ID" value="CAA42281.1"/>
    <property type="molecule type" value="Genomic_DNA"/>
</dbReference>
<dbReference type="EMBL" id="BK006937">
    <property type="protein sequence ID" value="DAA07538.1"/>
    <property type="molecule type" value="Genomic_DNA"/>
</dbReference>
<dbReference type="PIR" id="S05802">
    <property type="entry name" value="DDBY18"/>
</dbReference>
<dbReference type="RefSeq" id="NP_009992.1">
    <property type="nucleotide sequence ID" value="NM_001178777.1"/>
</dbReference>
<dbReference type="SMR" id="P10862"/>
<dbReference type="BioGRID" id="31042">
    <property type="interactions" value="248"/>
</dbReference>
<dbReference type="ComplexPortal" id="CPX-2902">
    <property type="entry name" value="RAD6-RAD18 ubiquitin ligase complex"/>
</dbReference>
<dbReference type="DIP" id="DIP-1172N"/>
<dbReference type="FunCoup" id="P10862">
    <property type="interactions" value="353"/>
</dbReference>
<dbReference type="IntAct" id="P10862">
    <property type="interactions" value="13"/>
</dbReference>
<dbReference type="MINT" id="P10862"/>
<dbReference type="STRING" id="4932.YCR066W"/>
<dbReference type="GlyGen" id="P10862">
    <property type="glycosylation" value="1 site"/>
</dbReference>
<dbReference type="iPTMnet" id="P10862"/>
<dbReference type="PaxDb" id="4932-YCR066W"/>
<dbReference type="PeptideAtlas" id="P10862"/>
<dbReference type="EnsemblFungi" id="YCR066W_mRNA">
    <property type="protein sequence ID" value="YCR066W"/>
    <property type="gene ID" value="YCR066W"/>
</dbReference>
<dbReference type="GeneID" id="850430"/>
<dbReference type="KEGG" id="sce:YCR066W"/>
<dbReference type="AGR" id="SGD:S000000662"/>
<dbReference type="SGD" id="S000000662">
    <property type="gene designation" value="RAD18"/>
</dbReference>
<dbReference type="VEuPathDB" id="FungiDB:YCR066W"/>
<dbReference type="eggNOG" id="KOG0287">
    <property type="taxonomic scope" value="Eukaryota"/>
</dbReference>
<dbReference type="GeneTree" id="ENSGT00390000011230"/>
<dbReference type="HOGENOM" id="CLU_028491_2_0_1"/>
<dbReference type="InParanoid" id="P10862"/>
<dbReference type="OMA" id="IPNTGPR"/>
<dbReference type="OrthoDB" id="9049620at2759"/>
<dbReference type="BioCyc" id="YEAST:G3O-29369-MONOMER"/>
<dbReference type="Reactome" id="R-SCE-8866654">
    <property type="pathway name" value="E3 ubiquitin ligases ubiquitinate target proteins"/>
</dbReference>
<dbReference type="UniPathway" id="UPA00143"/>
<dbReference type="BioGRID-ORCS" id="850430">
    <property type="hits" value="0 hits in 10 CRISPR screens"/>
</dbReference>
<dbReference type="PRO" id="PR:P10862"/>
<dbReference type="Proteomes" id="UP000002311">
    <property type="component" value="Chromosome III"/>
</dbReference>
<dbReference type="RNAct" id="P10862">
    <property type="molecule type" value="protein"/>
</dbReference>
<dbReference type="GO" id="GO:0000785">
    <property type="term" value="C:chromatin"/>
    <property type="evidence" value="ECO:0000314"/>
    <property type="project" value="SGD"/>
</dbReference>
<dbReference type="GO" id="GO:0005634">
    <property type="term" value="C:nucleus"/>
    <property type="evidence" value="ECO:0000314"/>
    <property type="project" value="SGD"/>
</dbReference>
<dbReference type="GO" id="GO:0097505">
    <property type="term" value="C:Rad6-Rad18 complex"/>
    <property type="evidence" value="ECO:0000314"/>
    <property type="project" value="SGD"/>
</dbReference>
<dbReference type="GO" id="GO:0003697">
    <property type="term" value="F:single-stranded DNA binding"/>
    <property type="evidence" value="ECO:0000314"/>
    <property type="project" value="SGD"/>
</dbReference>
<dbReference type="GO" id="GO:0061630">
    <property type="term" value="F:ubiquitin protein ligase activity"/>
    <property type="evidence" value="ECO:0007669"/>
    <property type="project" value="InterPro"/>
</dbReference>
<dbReference type="GO" id="GO:0008270">
    <property type="term" value="F:zinc ion binding"/>
    <property type="evidence" value="ECO:0007669"/>
    <property type="project" value="UniProtKB-KW"/>
</dbReference>
<dbReference type="GO" id="GO:0042275">
    <property type="term" value="P:error-free postreplication DNA repair"/>
    <property type="evidence" value="ECO:0000316"/>
    <property type="project" value="SGD"/>
</dbReference>
<dbReference type="GO" id="GO:0070987">
    <property type="term" value="P:error-free translesion synthesis"/>
    <property type="evidence" value="ECO:0000316"/>
    <property type="project" value="SGD"/>
</dbReference>
<dbReference type="GO" id="GO:0042276">
    <property type="term" value="P:error-prone translesion synthesis"/>
    <property type="evidence" value="ECO:0000316"/>
    <property type="project" value="SGD"/>
</dbReference>
<dbReference type="GO" id="GO:0006301">
    <property type="term" value="P:postreplication repair"/>
    <property type="evidence" value="ECO:0000318"/>
    <property type="project" value="GO_Central"/>
</dbReference>
<dbReference type="GO" id="GO:0006513">
    <property type="term" value="P:protein monoubiquitination"/>
    <property type="evidence" value="ECO:0000315"/>
    <property type="project" value="SGD"/>
</dbReference>
<dbReference type="CDD" id="cd23148">
    <property type="entry name" value="RING-HC_ScRAD18-like"/>
    <property type="match status" value="1"/>
</dbReference>
<dbReference type="FunFam" id="3.30.40.10:FF:000172">
    <property type="entry name" value="E3 ubiquitin-protein ligase RAD18"/>
    <property type="match status" value="1"/>
</dbReference>
<dbReference type="Gene3D" id="3.30.160.60">
    <property type="entry name" value="Classic Zinc Finger"/>
    <property type="match status" value="1"/>
</dbReference>
<dbReference type="Gene3D" id="3.30.40.10">
    <property type="entry name" value="Zinc/RING finger domain, C3HC4 (zinc finger)"/>
    <property type="match status" value="1"/>
</dbReference>
<dbReference type="InterPro" id="IPR039577">
    <property type="entry name" value="Rad18"/>
</dbReference>
<dbReference type="InterPro" id="IPR004580">
    <property type="entry name" value="Rad18_fungi"/>
</dbReference>
<dbReference type="InterPro" id="IPR006642">
    <property type="entry name" value="Rad18_UBZ4"/>
</dbReference>
<dbReference type="InterPro" id="IPR003034">
    <property type="entry name" value="SAP_dom"/>
</dbReference>
<dbReference type="InterPro" id="IPR001841">
    <property type="entry name" value="Znf_RING"/>
</dbReference>
<dbReference type="InterPro" id="IPR013083">
    <property type="entry name" value="Znf_RING/FYVE/PHD"/>
</dbReference>
<dbReference type="InterPro" id="IPR017907">
    <property type="entry name" value="Znf_RING_CS"/>
</dbReference>
<dbReference type="NCBIfam" id="TIGR00599">
    <property type="entry name" value="rad18"/>
    <property type="match status" value="1"/>
</dbReference>
<dbReference type="PANTHER" id="PTHR14134">
    <property type="entry name" value="E3 UBIQUITIN-PROTEIN LIGASE RAD18"/>
    <property type="match status" value="1"/>
</dbReference>
<dbReference type="PANTHER" id="PTHR14134:SF2">
    <property type="entry name" value="E3 UBIQUITIN-PROTEIN LIGASE RAD18"/>
    <property type="match status" value="1"/>
</dbReference>
<dbReference type="Pfam" id="PF02037">
    <property type="entry name" value="SAP"/>
    <property type="match status" value="1"/>
</dbReference>
<dbReference type="Pfam" id="PF13923">
    <property type="entry name" value="zf-C3HC4_2"/>
    <property type="match status" value="1"/>
</dbReference>
<dbReference type="SMART" id="SM00184">
    <property type="entry name" value="RING"/>
    <property type="match status" value="1"/>
</dbReference>
<dbReference type="SMART" id="SM00513">
    <property type="entry name" value="SAP"/>
    <property type="match status" value="1"/>
</dbReference>
<dbReference type="SMART" id="SM00734">
    <property type="entry name" value="ZnF_Rad18"/>
    <property type="match status" value="1"/>
</dbReference>
<dbReference type="SUPFAM" id="SSF57850">
    <property type="entry name" value="RING/U-box"/>
    <property type="match status" value="1"/>
</dbReference>
<dbReference type="PROSITE" id="PS50800">
    <property type="entry name" value="SAP"/>
    <property type="match status" value="1"/>
</dbReference>
<dbReference type="PROSITE" id="PS00518">
    <property type="entry name" value="ZF_RING_1"/>
    <property type="match status" value="1"/>
</dbReference>
<dbReference type="PROSITE" id="PS50089">
    <property type="entry name" value="ZF_RING_2"/>
    <property type="match status" value="1"/>
</dbReference>
<dbReference type="PROSITE" id="PS51908">
    <property type="entry name" value="ZF_UBZ4"/>
    <property type="match status" value="1"/>
</dbReference>
<gene>
    <name type="primary">RAD18</name>
    <name type="ordered locus">YCR066W</name>
    <name type="ORF">YCR66W</name>
</gene>
<reference key="1">
    <citation type="journal article" date="1988" name="Gene">
        <title>Potential DNA-binding domains in the RAD18 gene product of Saccharomyces cerevisiae.</title>
        <authorList>
            <person name="Chanet R."/>
            <person name="Magana-Schwencke N."/>
            <person name="Fabre F."/>
        </authorList>
    </citation>
    <scope>NUCLEOTIDE SEQUENCE [GENOMIC DNA]</scope>
</reference>
<reference key="2">
    <citation type="journal article" date="1988" name="Nucleic Acids Res.">
        <title>The Saccharomyces cerevisiae RAD18 gene encodes a protein that contains potential zinc finger domains for nucleic acid binding and a putative nucleotide binding sequence.</title>
        <authorList>
            <person name="Jones J.S."/>
            <person name="Weber S."/>
            <person name="Prakash L."/>
        </authorList>
    </citation>
    <scope>NUCLEOTIDE SEQUENCE [GENOMIC DNA]</scope>
</reference>
<reference key="3">
    <citation type="journal article" date="1992" name="Yeast">
        <title>Sequence of the sup61-RAD18 region on chromosome III of Saccharomyces cerevisiae.</title>
        <authorList>
            <person name="Benit P."/>
            <person name="Chanet R."/>
            <person name="Fabre F."/>
            <person name="Faye G."/>
            <person name="Fukuhara H."/>
            <person name="Sor F."/>
        </authorList>
    </citation>
    <scope>NUCLEOTIDE SEQUENCE [GENOMIC DNA]</scope>
</reference>
<reference key="4">
    <citation type="journal article" date="1992" name="Nature">
        <title>The complete DNA sequence of yeast chromosome III.</title>
        <authorList>
            <person name="Oliver S.G."/>
            <person name="van der Aart Q.J.M."/>
            <person name="Agostoni-Carbone M.L."/>
            <person name="Aigle M."/>
            <person name="Alberghina L."/>
            <person name="Alexandraki D."/>
            <person name="Antoine G."/>
            <person name="Anwar R."/>
            <person name="Ballesta J.P.G."/>
            <person name="Benit P."/>
            <person name="Berben G."/>
            <person name="Bergantino E."/>
            <person name="Biteau N."/>
            <person name="Bolle P.-A."/>
            <person name="Bolotin-Fukuhara M."/>
            <person name="Brown A."/>
            <person name="Brown A.J.P."/>
            <person name="Buhler J.-M."/>
            <person name="Carcano C."/>
            <person name="Carignani G."/>
            <person name="Cederberg H."/>
            <person name="Chanet R."/>
            <person name="Contreras R."/>
            <person name="Crouzet M."/>
            <person name="Daignan-Fornier B."/>
            <person name="Defoor E."/>
            <person name="Delgado M.D."/>
            <person name="Demolder J."/>
            <person name="Doira C."/>
            <person name="Dubois E."/>
            <person name="Dujon B."/>
            <person name="Duesterhoeft A."/>
            <person name="Erdmann D."/>
            <person name="Esteban M."/>
            <person name="Fabre F."/>
            <person name="Fairhead C."/>
            <person name="Faye G."/>
            <person name="Feldmann H."/>
            <person name="Fiers W."/>
            <person name="Francingues-Gaillard M.-C."/>
            <person name="Franco L."/>
            <person name="Frontali L."/>
            <person name="Fukuhara H."/>
            <person name="Fuller L.J."/>
            <person name="Galland P."/>
            <person name="Gent M.E."/>
            <person name="Gigot D."/>
            <person name="Gilliquet V."/>
            <person name="Glansdorff N."/>
            <person name="Goffeau A."/>
            <person name="Grenson M."/>
            <person name="Grisanti P."/>
            <person name="Grivell L.A."/>
            <person name="de Haan M."/>
            <person name="Haasemann M."/>
            <person name="Hatat D."/>
            <person name="Hoenicka J."/>
            <person name="Hegemann J.H."/>
            <person name="Herbert C.J."/>
            <person name="Hilger F."/>
            <person name="Hohmann S."/>
            <person name="Hollenberg C.P."/>
            <person name="Huse K."/>
            <person name="Iborra F."/>
            <person name="Indge K.J."/>
            <person name="Isono K."/>
            <person name="Jacq C."/>
            <person name="Jacquet M."/>
            <person name="James C.M."/>
            <person name="Jauniaux J.-C."/>
            <person name="Jia Y."/>
            <person name="Jimenez A."/>
            <person name="Kelly A."/>
            <person name="Kleinhans U."/>
            <person name="Kreisl P."/>
            <person name="Lanfranchi G."/>
            <person name="Lewis C."/>
            <person name="van der Linden C.G."/>
            <person name="Lucchini G."/>
            <person name="Lutzenkirchen K."/>
            <person name="Maat M.J."/>
            <person name="Mallet L."/>
            <person name="Mannhaupt G."/>
            <person name="Martegani E."/>
            <person name="Mathieu A."/>
            <person name="Maurer C.T.C."/>
            <person name="McConnell D."/>
            <person name="McKee R.A."/>
            <person name="Messenguy F."/>
            <person name="Mewes H.-W."/>
            <person name="Molemans F."/>
            <person name="Montague M.A."/>
            <person name="Muzi Falconi M."/>
            <person name="Navas L."/>
            <person name="Newlon C.S."/>
            <person name="Noone D."/>
            <person name="Pallier C."/>
            <person name="Panzeri L."/>
            <person name="Pearson B.M."/>
            <person name="Perea J."/>
            <person name="Philippsen P."/>
            <person name="Pierard A."/>
            <person name="Planta R.J."/>
            <person name="Plevani P."/>
            <person name="Poetsch B."/>
            <person name="Pohl F.M."/>
            <person name="Purnelle B."/>
            <person name="Ramezani Rad M."/>
            <person name="Rasmussen S.W."/>
            <person name="Raynal A."/>
            <person name="Remacha M.A."/>
            <person name="Richterich P."/>
            <person name="Roberts A.B."/>
            <person name="Rodriguez F."/>
            <person name="Sanz E."/>
            <person name="Schaaff-Gerstenschlaeger I."/>
            <person name="Scherens B."/>
            <person name="Schweitzer B."/>
            <person name="Shu Y."/>
            <person name="Skala J."/>
            <person name="Slonimski P.P."/>
            <person name="Sor F."/>
            <person name="Soustelle C."/>
            <person name="Spiegelberg R."/>
            <person name="Stateva L.I."/>
            <person name="Steensma H.Y."/>
            <person name="Steiner S."/>
            <person name="Thierry A."/>
            <person name="Thireos G."/>
            <person name="Tzermia M."/>
            <person name="Urrestarazu L.A."/>
            <person name="Valle G."/>
            <person name="Vetter I."/>
            <person name="van Vliet-Reedijk J.C."/>
            <person name="Voet M."/>
            <person name="Volckaert G."/>
            <person name="Vreken P."/>
            <person name="Wang H."/>
            <person name="Warmington J.R."/>
            <person name="von Wettstein D."/>
            <person name="Wicksteed B.L."/>
            <person name="Wilson C."/>
            <person name="Wurst H."/>
            <person name="Xu G."/>
            <person name="Yoshikawa A."/>
            <person name="Zimmermann F.K."/>
            <person name="Sgouros J.G."/>
        </authorList>
    </citation>
    <scope>NUCLEOTIDE SEQUENCE [LARGE SCALE GENOMIC DNA]</scope>
    <source>
        <strain>ATCC 204508 / S288c</strain>
    </source>
</reference>
<reference key="5">
    <citation type="journal article" date="2014" name="G3 (Bethesda)">
        <title>The reference genome sequence of Saccharomyces cerevisiae: Then and now.</title>
        <authorList>
            <person name="Engel S.R."/>
            <person name="Dietrich F.S."/>
            <person name="Fisk D.G."/>
            <person name="Binkley G."/>
            <person name="Balakrishnan R."/>
            <person name="Costanzo M.C."/>
            <person name="Dwight S.S."/>
            <person name="Hitz B.C."/>
            <person name="Karra K."/>
            <person name="Nash R.S."/>
            <person name="Weng S."/>
            <person name="Wong E.D."/>
            <person name="Lloyd P."/>
            <person name="Skrzypek M.S."/>
            <person name="Miyasato S.R."/>
            <person name="Simison M."/>
            <person name="Cherry J.M."/>
        </authorList>
    </citation>
    <scope>GENOME REANNOTATION</scope>
    <source>
        <strain>ATCC 204508 / S288c</strain>
    </source>
</reference>
<reference key="6">
    <citation type="journal article" date="1994" name="Genes Dev.">
        <title>Specific complex formation between yeast RAD6 and RAD18 proteins: a potential mechanism for targeting RAD6 ubiquitin-conjugating activity to DNA damage sites.</title>
        <authorList>
            <person name="Bailly V."/>
            <person name="Lamb J."/>
            <person name="Sung P."/>
            <person name="Prakash S."/>
            <person name="Prakash L."/>
        </authorList>
    </citation>
    <scope>FUNCTION</scope>
    <scope>SINGLE STRAND DNA-BINDING</scope>
    <scope>INTERACTION WITH UBC2</scope>
</reference>
<reference key="7">
    <citation type="journal article" date="1997" name="J. Biol. Chem.">
        <title>Yeast DNA repair proteins Rad6 and Rad18 form a heterodimer that has ubiquitin conjugating, DNA binding, and ATP hydrolytic activities.</title>
        <authorList>
            <person name="Bailly V."/>
            <person name="Lauder S."/>
            <person name="Prakash S."/>
            <person name="Prakash L."/>
        </authorList>
    </citation>
    <scope>FUNCTION</scope>
    <scope>INTERACTION WITH UBC2</scope>
</reference>
<reference key="8">
    <citation type="journal article" date="2000" name="EMBO J.">
        <title>Two RING finger proteins mediate cooperation between ubiquitin-conjugating enzymes in DNA repair.</title>
        <authorList>
            <person name="Ulrich H.D."/>
            <person name="Jentsch S."/>
        </authorList>
    </citation>
    <scope>FUNCTION</scope>
    <scope>SUBCELLULAR LOCATION</scope>
    <scope>SUBUNIT</scope>
    <scope>INTERACTION WITH RAD5 AND UBC13</scope>
</reference>
<reference key="9">
    <citation type="journal article" date="2000" name="Genetics">
        <title>The Saccharomyces cerevisiae RAD6 group is composed of an error-prone and two error-free postreplication repair pathways.</title>
        <authorList>
            <person name="Xiao W."/>
            <person name="Chow B.L."/>
            <person name="Broomfield S."/>
            <person name="Hanna M."/>
        </authorList>
    </citation>
    <scope>FUNCTION OF THE UBC13-MMS2 COMPLEX</scope>
</reference>
<reference key="10">
    <citation type="journal article" date="2002" name="Nature">
        <title>RAD6-dependent DNA repair is linked to modification of PCNA by ubiquitin and SUMO.</title>
        <authorList>
            <person name="Hoege C."/>
            <person name="Pfander B."/>
            <person name="Moldovan G.-L."/>
            <person name="Pyrowolakis G."/>
            <person name="Jentsch S."/>
        </authorList>
    </citation>
    <scope>FUNCTION</scope>
    <scope>INTERACTION WITH POL30 AND UBC9</scope>
</reference>
<reference key="11">
    <citation type="journal article" date="2003" name="Nature">
        <title>Global analysis of protein expression in yeast.</title>
        <authorList>
            <person name="Ghaemmaghami S."/>
            <person name="Huh W.-K."/>
            <person name="Bower K."/>
            <person name="Howson R.W."/>
            <person name="Belle A."/>
            <person name="Dephoure N."/>
            <person name="O'Shea E.K."/>
            <person name="Weissman J.S."/>
        </authorList>
    </citation>
    <scope>LEVEL OF PROTEIN EXPRESSION [LARGE SCALE ANALYSIS]</scope>
</reference>
<reference key="12">
    <citation type="journal article" date="2004" name="Genes Cells">
        <title>Rad18/Rad5/Mms2-mediated polyubiquitination of PCNA is implicated in replication completion during replication stress.</title>
        <authorList>
            <person name="Branzei D."/>
            <person name="Seki M."/>
            <person name="Enomoto T."/>
        </authorList>
    </citation>
    <scope>FUNCTION</scope>
</reference>
<reference key="13">
    <citation type="journal article" date="2004" name="Nucleic Acids Res.">
        <title>The post-replication repair RAD18 and RAD6 genes are involved in the prevention of spontaneous mutations caused by 7,8-dihydro-8-oxoguanine in Saccharomyces cerevisiae.</title>
        <authorList>
            <person name="de Padula M."/>
            <person name="Slezak G."/>
            <person name="Auffret van Der Kemp P."/>
            <person name="Boiteux S."/>
        </authorList>
    </citation>
    <scope>FUNCTION</scope>
</reference>
<reference key="14">
    <citation type="journal article" date="2005" name="Proc. Natl. Acad. Sci. U.S.A.">
        <title>The error-free component of the RAD6/RAD18 DNA damage tolerance pathway of budding yeast employs sister-strand recombination.</title>
        <authorList>
            <person name="Zhang H."/>
            <person name="Lawrence C.W."/>
        </authorList>
    </citation>
    <scope>FUNCTION</scope>
</reference>
<reference key="15">
    <citation type="journal article" date="2007" name="Proc. Natl. Acad. Sci. U.S.A.">
        <title>Analysis of phosphorylation sites on proteins from Saccharomyces cerevisiae by electron transfer dissociation (ETD) mass spectrometry.</title>
        <authorList>
            <person name="Chi A."/>
            <person name="Huttenhower C."/>
            <person name="Geer L.Y."/>
            <person name="Coon J.J."/>
            <person name="Syka J.E.P."/>
            <person name="Bai D.L."/>
            <person name="Shabanowitz J."/>
            <person name="Burke D.J."/>
            <person name="Troyanskaya O.G."/>
            <person name="Hunt D.F."/>
        </authorList>
    </citation>
    <scope>PHOSPHORYLATION [LARGE SCALE ANALYSIS] AT THR-155 AND SER-174</scope>
    <scope>IDENTIFICATION BY MASS SPECTROMETRY [LARGE SCALE ANALYSIS]</scope>
</reference>
<reference key="16">
    <citation type="journal article" date="2008" name="Mol. Cell. Proteomics">
        <title>A multidimensional chromatography technology for in-depth phosphoproteome analysis.</title>
        <authorList>
            <person name="Albuquerque C.P."/>
            <person name="Smolka M.B."/>
            <person name="Payne S.H."/>
            <person name="Bafna V."/>
            <person name="Eng J."/>
            <person name="Zhou H."/>
        </authorList>
    </citation>
    <scope>IDENTIFICATION BY MASS SPECTROMETRY [LARGE SCALE ANALYSIS]</scope>
</reference>
<reference key="17">
    <citation type="journal article" date="2009" name="Science">
        <title>Global analysis of Cdk1 substrate phosphorylation sites provides insights into evolution.</title>
        <authorList>
            <person name="Holt L.J."/>
            <person name="Tuch B.B."/>
            <person name="Villen J."/>
            <person name="Johnson A.D."/>
            <person name="Gygi S.P."/>
            <person name="Morgan D.O."/>
        </authorList>
    </citation>
    <scope>IDENTIFICATION BY MASS SPECTROMETRY [LARGE SCALE ANALYSIS]</scope>
</reference>
<reference key="18">
    <citation type="journal article" date="2012" name="Proteomics">
        <title>Sites of ubiquitin attachment in Saccharomyces cerevisiae.</title>
        <authorList>
            <person name="Starita L.M."/>
            <person name="Lo R.S."/>
            <person name="Eng J.K."/>
            <person name="von Haller P.D."/>
            <person name="Fields S."/>
        </authorList>
    </citation>
    <scope>UBIQUITINATION [LARGE SCALE ANALYSIS] AT LYS-204</scope>
    <scope>IDENTIFICATION BY MASS SPECTROMETRY [LARGE SCALE ANALYSIS]</scope>
</reference>
<name>RAD18_YEAST</name>
<protein>
    <recommendedName>
        <fullName>Postreplication repair E3 ubiquitin-protein ligase RAD18</fullName>
        <ecNumber>2.3.2.27</ecNumber>
    </recommendedName>
    <alternativeName>
        <fullName evidence="14">RING-type E3 ubiquitin transferase RAD18</fullName>
    </alternativeName>
    <alternativeName>
        <fullName>Radiation sensitivity protein 18</fullName>
    </alternativeName>
</protein>
<accession>P10862</accession>
<accession>D6VR69</accession>
<accession>Q58AT6</accession>
<sequence length="487" mass="55230">MDHQITTASDFTTTSIPSLYQLDTLLRCHICKDFLKVPVLTPCGHTFCSLCIRTHLNNQPNCPLCLFEFRESLLRSEFLVSEIIQSYTSLRSSLLDALRIPKPTPVPENEEVPGPENSSWIELISESESDSVNAADDDLQIVATSERKLAKRSMTDILPLSSKPSKRNFAMFRSERIKKKSKPNEQMAQCPICQQFYPLKALEKTHLDECLTLQSLGKKPKISTTFPTESNPHNKSSSRFKVRTPEVDKSSCGETSHVDKYLNSMMSAEHQRLPKINFTSMTQSQIKQKLSSLGLSTNGTRQNMIKRYNHYEMLWNSNFCDSLEPVDEAELKRQLLSWDVSHNKTPQNSSNKGGISKLMIMKSNGKSSSYRKLLENFKNDKFNRKGWMVMFRKDFARLIREAKMKIKTGSSDSSGSVGHSNDGDGVEKVQSDQGTEDQQMEKDQDTVINEDRVAGERNLPNEDSTDADLSRELMDLNEYSKDPPGNN</sequence>
<keyword id="KW-0227">DNA damage</keyword>
<keyword id="KW-0234">DNA repair</keyword>
<keyword id="KW-0238">DNA-binding</keyword>
<keyword id="KW-1017">Isopeptide bond</keyword>
<keyword id="KW-0479">Metal-binding</keyword>
<keyword id="KW-0539">Nucleus</keyword>
<keyword id="KW-0597">Phosphoprotein</keyword>
<keyword id="KW-1185">Reference proteome</keyword>
<keyword id="KW-0808">Transferase</keyword>
<keyword id="KW-0832">Ubl conjugation</keyword>
<keyword id="KW-0833">Ubl conjugation pathway</keyword>
<keyword id="KW-0862">Zinc</keyword>
<keyword id="KW-0863">Zinc-finger</keyword>
<organism>
    <name type="scientific">Saccharomyces cerevisiae (strain ATCC 204508 / S288c)</name>
    <name type="common">Baker's yeast</name>
    <dbReference type="NCBI Taxonomy" id="559292"/>
    <lineage>
        <taxon>Eukaryota</taxon>
        <taxon>Fungi</taxon>
        <taxon>Dikarya</taxon>
        <taxon>Ascomycota</taxon>
        <taxon>Saccharomycotina</taxon>
        <taxon>Saccharomycetes</taxon>
        <taxon>Saccharomycetales</taxon>
        <taxon>Saccharomycetaceae</taxon>
        <taxon>Saccharomyces</taxon>
    </lineage>
</organism>
<feature type="chain" id="PRO_0000056161" description="Postreplication repair E3 ubiquitin-protein ligase RAD18">
    <location>
        <begin position="1"/>
        <end position="487"/>
    </location>
</feature>
<feature type="domain" description="SAP" evidence="2">
    <location>
        <begin position="278"/>
        <end position="312"/>
    </location>
</feature>
<feature type="zinc finger region" description="RING-type" evidence="1">
    <location>
        <begin position="28"/>
        <end position="66"/>
    </location>
</feature>
<feature type="zinc finger region" description="UBZ4-type" evidence="3">
    <location>
        <begin position="187"/>
        <end position="215"/>
    </location>
</feature>
<feature type="region of interest" description="Disordered" evidence="4">
    <location>
        <begin position="222"/>
        <end position="254"/>
    </location>
</feature>
<feature type="region of interest" description="Disordered" evidence="4">
    <location>
        <begin position="407"/>
        <end position="487"/>
    </location>
</feature>
<feature type="compositionally biased region" description="Polar residues" evidence="4">
    <location>
        <begin position="222"/>
        <end position="235"/>
    </location>
</feature>
<feature type="compositionally biased region" description="Basic and acidic residues" evidence="4">
    <location>
        <begin position="243"/>
        <end position="254"/>
    </location>
</feature>
<feature type="compositionally biased region" description="Low complexity" evidence="4">
    <location>
        <begin position="409"/>
        <end position="420"/>
    </location>
</feature>
<feature type="compositionally biased region" description="Basic and acidic residues" evidence="4">
    <location>
        <begin position="421"/>
        <end position="430"/>
    </location>
</feature>
<feature type="compositionally biased region" description="Basic and acidic residues" evidence="4">
    <location>
        <begin position="439"/>
        <end position="455"/>
    </location>
</feature>
<feature type="compositionally biased region" description="Basic and acidic residues" evidence="4">
    <location>
        <begin position="468"/>
        <end position="481"/>
    </location>
</feature>
<feature type="binding site" evidence="3">
    <location>
        <position position="190"/>
    </location>
    <ligand>
        <name>Zn(2+)</name>
        <dbReference type="ChEBI" id="CHEBI:29105"/>
    </ligand>
</feature>
<feature type="binding site" evidence="3">
    <location>
        <position position="193"/>
    </location>
    <ligand>
        <name>Zn(2+)</name>
        <dbReference type="ChEBI" id="CHEBI:29105"/>
    </ligand>
</feature>
<feature type="binding site" evidence="3">
    <location>
        <position position="206"/>
    </location>
    <ligand>
        <name>Zn(2+)</name>
        <dbReference type="ChEBI" id="CHEBI:29105"/>
    </ligand>
</feature>
<feature type="binding site" evidence="3">
    <location>
        <position position="210"/>
    </location>
    <ligand>
        <name>Zn(2+)</name>
        <dbReference type="ChEBI" id="CHEBI:29105"/>
    </ligand>
</feature>
<feature type="modified residue" description="Phosphothreonine" evidence="15">
    <location>
        <position position="155"/>
    </location>
</feature>
<feature type="modified residue" description="Phosphoserine" evidence="15">
    <location>
        <position position="174"/>
    </location>
</feature>
<feature type="cross-link" description="Glycyl lysine isopeptide (Lys-Gly) (interchain with G-Cter in ubiquitin)" evidence="16">
    <location>
        <position position="204"/>
    </location>
</feature>